<name>BIG2_HUMAN</name>
<reference key="1">
    <citation type="journal article" date="1999" name="J. Biol. Chem.">
        <title>Purification and cloning of a brefeldin A-inhibited guanine nucleotide-exchange protein for ADP-ribosylation factors.</title>
        <authorList>
            <person name="Togawa A."/>
            <person name="Morinaga N."/>
            <person name="Ogasawara M."/>
            <person name="Moss J."/>
            <person name="Vaughan M."/>
        </authorList>
    </citation>
    <scope>NUCLEOTIDE SEQUENCE [MRNA]</scope>
    <source>
        <tissue>Brain</tissue>
    </source>
</reference>
<reference key="2">
    <citation type="journal article" date="2001" name="Nature">
        <title>The DNA sequence and comparative analysis of human chromosome 20.</title>
        <authorList>
            <person name="Deloukas P."/>
            <person name="Matthews L.H."/>
            <person name="Ashurst J.L."/>
            <person name="Burton J."/>
            <person name="Gilbert J.G.R."/>
            <person name="Jones M."/>
            <person name="Stavrides G."/>
            <person name="Almeida J.P."/>
            <person name="Babbage A.K."/>
            <person name="Bagguley C.L."/>
            <person name="Bailey J."/>
            <person name="Barlow K.F."/>
            <person name="Bates K.N."/>
            <person name="Beard L.M."/>
            <person name="Beare D.M."/>
            <person name="Beasley O.P."/>
            <person name="Bird C.P."/>
            <person name="Blakey S.E."/>
            <person name="Bridgeman A.M."/>
            <person name="Brown A.J."/>
            <person name="Buck D."/>
            <person name="Burrill W.D."/>
            <person name="Butler A.P."/>
            <person name="Carder C."/>
            <person name="Carter N.P."/>
            <person name="Chapman J.C."/>
            <person name="Clamp M."/>
            <person name="Clark G."/>
            <person name="Clark L.N."/>
            <person name="Clark S.Y."/>
            <person name="Clee C.M."/>
            <person name="Clegg S."/>
            <person name="Cobley V.E."/>
            <person name="Collier R.E."/>
            <person name="Connor R.E."/>
            <person name="Corby N.R."/>
            <person name="Coulson A."/>
            <person name="Coville G.J."/>
            <person name="Deadman R."/>
            <person name="Dhami P.D."/>
            <person name="Dunn M."/>
            <person name="Ellington A.G."/>
            <person name="Frankland J.A."/>
            <person name="Fraser A."/>
            <person name="French L."/>
            <person name="Garner P."/>
            <person name="Grafham D.V."/>
            <person name="Griffiths C."/>
            <person name="Griffiths M.N.D."/>
            <person name="Gwilliam R."/>
            <person name="Hall R.E."/>
            <person name="Hammond S."/>
            <person name="Harley J.L."/>
            <person name="Heath P.D."/>
            <person name="Ho S."/>
            <person name="Holden J.L."/>
            <person name="Howden P.J."/>
            <person name="Huckle E."/>
            <person name="Hunt A.R."/>
            <person name="Hunt S.E."/>
            <person name="Jekosch K."/>
            <person name="Johnson C.M."/>
            <person name="Johnson D."/>
            <person name="Kay M.P."/>
            <person name="Kimberley A.M."/>
            <person name="King A."/>
            <person name="Knights A."/>
            <person name="Laird G.K."/>
            <person name="Lawlor S."/>
            <person name="Lehvaeslaiho M.H."/>
            <person name="Leversha M.A."/>
            <person name="Lloyd C."/>
            <person name="Lloyd D.M."/>
            <person name="Lovell J.D."/>
            <person name="Marsh V.L."/>
            <person name="Martin S.L."/>
            <person name="McConnachie L.J."/>
            <person name="McLay K."/>
            <person name="McMurray A.A."/>
            <person name="Milne S.A."/>
            <person name="Mistry D."/>
            <person name="Moore M.J.F."/>
            <person name="Mullikin J.C."/>
            <person name="Nickerson T."/>
            <person name="Oliver K."/>
            <person name="Parker A."/>
            <person name="Patel R."/>
            <person name="Pearce T.A.V."/>
            <person name="Peck A.I."/>
            <person name="Phillimore B.J.C.T."/>
            <person name="Prathalingam S.R."/>
            <person name="Plumb R.W."/>
            <person name="Ramsay H."/>
            <person name="Rice C.M."/>
            <person name="Ross M.T."/>
            <person name="Scott C.E."/>
            <person name="Sehra H.K."/>
            <person name="Shownkeen R."/>
            <person name="Sims S."/>
            <person name="Skuce C.D."/>
            <person name="Smith M.L."/>
            <person name="Soderlund C."/>
            <person name="Steward C.A."/>
            <person name="Sulston J.E."/>
            <person name="Swann R.M."/>
            <person name="Sycamore N."/>
            <person name="Taylor R."/>
            <person name="Tee L."/>
            <person name="Thomas D.W."/>
            <person name="Thorpe A."/>
            <person name="Tracey A."/>
            <person name="Tromans A.C."/>
            <person name="Vaudin M."/>
            <person name="Wall M."/>
            <person name="Wallis J.M."/>
            <person name="Whitehead S.L."/>
            <person name="Whittaker P."/>
            <person name="Willey D.L."/>
            <person name="Williams L."/>
            <person name="Williams S.A."/>
            <person name="Wilming L."/>
            <person name="Wray P.W."/>
            <person name="Hubbard T."/>
            <person name="Durbin R.M."/>
            <person name="Bentley D.R."/>
            <person name="Beck S."/>
            <person name="Rogers J."/>
        </authorList>
    </citation>
    <scope>NUCLEOTIDE SEQUENCE [LARGE SCALE GENOMIC DNA]</scope>
</reference>
<reference key="3">
    <citation type="journal article" date="2000" name="Proc. Natl. Acad. Sci. U.S.A.">
        <title>Identification and localization of two brefeldin A-inhibited guanine nucleotide-exchange proteins for ADP-ribosylation factors in a macromolecular complex.</title>
        <authorList>
            <person name="Yamaji R."/>
            <person name="Adamik R."/>
            <person name="Takeda K."/>
            <person name="Togawa A."/>
            <person name="Pacheco-Rodriguez G."/>
            <person name="Ferrans V.J."/>
            <person name="Moss J."/>
            <person name="Vaughan M."/>
        </authorList>
    </citation>
    <scope>SUBCELLULAR LOCATION</scope>
    <scope>INTERACTION WITH ARFGEF1</scope>
</reference>
<reference key="4">
    <citation type="journal article" date="2002" name="Biochem. Biophys. Res. Commun.">
        <title>Dominant-negative mutant of BIG2, an ARF-guanine nucleotide exchange factor, specifically affects membrane trafficking from the trans-Golgi network through inhibiting membrane association of AP-1 and GGA coat proteins.</title>
        <authorList>
            <person name="Shinotsuka C."/>
            <person name="Waguri S."/>
            <person name="Wakasugi M."/>
            <person name="Uchiyama Y."/>
            <person name="Nakayama K."/>
        </authorList>
    </citation>
    <scope>FUNCTION</scope>
    <scope>MUTAGENESIS OF GLU-738</scope>
</reference>
<reference key="5">
    <citation type="journal article" date="2003" name="Proc. Natl. Acad. Sci. U.S.A.">
        <title>Protein kinase A-anchoring (AKAP) domains in brefeldin A-inhibited guanine nucleotide-exchange protein 2 (BIG2).</title>
        <authorList>
            <person name="Li H."/>
            <person name="Adamik R."/>
            <person name="Pacheco-Rodriguez G."/>
            <person name="Moss J."/>
            <person name="Vaughan M."/>
        </authorList>
    </citation>
    <scope>FUNCTION</scope>
    <scope>INTERACTION WITH PRKAR1A; PRKAR2A; PRKAR1B AND PRKAR2B</scope>
    <scope>SUBCELLULAR LOCATION</scope>
</reference>
<reference key="6">
    <citation type="journal article" date="2004" name="Mol. Biol. Cell">
        <title>BIG2, a guanine nucleotide exchange factor for ADP-ribosylation factors: its localization to recycling endosomes and implication in the endosome integrity.</title>
        <authorList>
            <person name="Shin H.W."/>
            <person name="Morinaga N."/>
            <person name="Noda M."/>
            <person name="Nakayama K."/>
        </authorList>
    </citation>
    <scope>FUNCTION</scope>
    <scope>SUBCELLULAR LOCATION</scope>
    <scope>MUTAGENESIS OF GLU-738</scope>
</reference>
<reference key="7">
    <citation type="journal article" date="2005" name="Proc. Natl. Acad. Sci. U.S.A.">
        <title>Interaction of BIG2, a brefeldin A-inhibited guanine nucleotide-exchange protein, with exocyst protein Exo70.</title>
        <authorList>
            <person name="Xu K.F."/>
            <person name="Shen X."/>
            <person name="Li H."/>
            <person name="Pacheco-Rodriguez G."/>
            <person name="Moss J."/>
            <person name="Vaughan M."/>
        </authorList>
    </citation>
    <scope>INTERACTION WITH EXOC7</scope>
    <scope>SUBCELLULAR LOCATION</scope>
</reference>
<reference key="8">
    <citation type="journal article" date="2006" name="Cell">
        <title>Global, in vivo, and site-specific phosphorylation dynamics in signaling networks.</title>
        <authorList>
            <person name="Olsen J.V."/>
            <person name="Blagoev B."/>
            <person name="Gnad F."/>
            <person name="Macek B."/>
            <person name="Kumar C."/>
            <person name="Mortensen P."/>
            <person name="Mann M."/>
        </authorList>
    </citation>
    <scope>PHOSPHORYLATION [LARGE SCALE ANALYSIS] AT SER-218; SER-227; SER-1525 AND SER-1528</scope>
    <scope>IDENTIFICATION BY MASS SPECTROMETRY [LARGE SCALE ANALYSIS]</scope>
    <source>
        <tissue>Cervix carcinoma</tissue>
    </source>
</reference>
<reference key="9">
    <citation type="journal article" date="2006" name="Genes Cells">
        <title>AMY-1 (associate of Myc-1) localization to the trans-Golgi network through interacting with BIG2, a guanine-nucleotide exchange factor for ADP-ribosylation factors.</title>
        <authorList>
            <person name="Ishizaki R."/>
            <person name="Shin H.W."/>
            <person name="Iguchi-Ariga S.M."/>
            <person name="Ariga H."/>
            <person name="Nakayama K."/>
        </authorList>
    </citation>
    <scope>SUBCELLULAR LOCATION</scope>
    <scope>INTERACTION WITH MYCBP</scope>
</reference>
<reference key="10">
    <citation type="journal article" date="2006" name="Proc. Natl. Acad. Sci. U.S.A.">
        <title>Association of brefeldin A-inhibited guanine nucleotide-exchange protein 2 (BIG2) with recycling endosomes during transferrin uptake.</title>
        <authorList>
            <person name="Shen X."/>
            <person name="Xu K.F."/>
            <person name="Fan Q."/>
            <person name="Pacheco-Rodriguez G."/>
            <person name="Moss J."/>
            <person name="Vaughan M."/>
        </authorList>
    </citation>
    <scope>FUNCTION</scope>
    <scope>SUBCELLULAR LOCATION</scope>
</reference>
<reference key="11">
    <citation type="journal article" date="2007" name="J. Biol. Chem.">
        <title>The brefeldin A-inhibited guanine nucleotide-exchange protein, BIG2, regulates the constitutive release of TNFR1 exosome-like vesicles.</title>
        <authorList>
            <person name="Islam A."/>
            <person name="Shen X."/>
            <person name="Hiroi T."/>
            <person name="Moss J."/>
            <person name="Vaughan M."/>
            <person name="Levine S.J."/>
        </authorList>
    </citation>
    <scope>FUNCTION</scope>
    <scope>INTERACTION WITH TNFRSF1A</scope>
</reference>
<reference key="12">
    <citation type="journal article" date="2007" name="J. Biol. Chem.">
        <title>Interactions between conserved domains within homodimers in the BIG1, BIG2, and GBF1 Arf guanine nucleotide exchange factors.</title>
        <authorList>
            <person name="Ramaen O."/>
            <person name="Joubert A."/>
            <person name="Simister P."/>
            <person name="Belgareh-Touze N."/>
            <person name="Olivares-Sanchez M.C."/>
            <person name="Zeeh J.C."/>
            <person name="Chantalat S."/>
            <person name="Golinelli-Cohen M.P."/>
            <person name="Jackson C.L."/>
            <person name="Biou V."/>
            <person name="Cherfils J."/>
        </authorList>
    </citation>
    <scope>SUBUNIT</scope>
</reference>
<reference key="13">
    <citation type="journal article" date="2007" name="Proc. Natl. Acad. Sci. U.S.A.">
        <title>Regulation of brefeldin A-inhibited guanine nucleotide-exchange protein 1 (BIG1) and BIG2 activity via PKA and protein phosphatase 1gamma.</title>
        <authorList>
            <person name="Kuroda F."/>
            <person name="Moss J."/>
            <person name="Vaughan M."/>
        </authorList>
    </citation>
    <scope>PHOSPHORYLATION</scope>
    <scope>INTERACTION WITH PPP1CC</scope>
</reference>
<reference key="14">
    <citation type="journal article" date="2008" name="J. Biol. Chem.">
        <title>cAMP-dependent protein kinase A (PKA) signaling induces TNFR1 exosome-like vesicle release via anchoring of PKA regulatory subunit RIIbeta to BIG2.</title>
        <authorList>
            <person name="Islam A."/>
            <person name="Jones H."/>
            <person name="Hiroi T."/>
            <person name="Lam J."/>
            <person name="Zhang J."/>
            <person name="Moss J."/>
            <person name="Vaughan M."/>
            <person name="Levine S.J."/>
        </authorList>
    </citation>
    <scope>FUNCTION</scope>
    <scope>INTERACTION WITH PRKAR2B</scope>
    <scope>MUTAGENESIS OF VAL-289 AND VAL-534</scope>
</reference>
<reference key="15">
    <citation type="journal article" date="2008" name="Mol. Cell">
        <title>Kinase-selective enrichment enables quantitative phosphoproteomics of the kinome across the cell cycle.</title>
        <authorList>
            <person name="Daub H."/>
            <person name="Olsen J.V."/>
            <person name="Bairlein M."/>
            <person name="Gnad F."/>
            <person name="Oppermann F.S."/>
            <person name="Korner R."/>
            <person name="Greff Z."/>
            <person name="Keri G."/>
            <person name="Stemmann O."/>
            <person name="Mann M."/>
        </authorList>
    </citation>
    <scope>PHOSPHORYLATION [LARGE SCALE ANALYSIS] AT SER-218; SER-227; SER-1528 AND SER-1782</scope>
    <scope>IDENTIFICATION BY MASS SPECTROMETRY [LARGE SCALE ANALYSIS]</scope>
    <source>
        <tissue>Cervix carcinoma</tissue>
    </source>
</reference>
<reference key="16">
    <citation type="journal article" date="2008" name="Proc. Natl. Acad. Sci. U.S.A.">
        <title>A quantitative atlas of mitotic phosphorylation.</title>
        <authorList>
            <person name="Dephoure N."/>
            <person name="Zhou C."/>
            <person name="Villen J."/>
            <person name="Beausoleil S.A."/>
            <person name="Bakalarski C.E."/>
            <person name="Elledge S.J."/>
            <person name="Gygi S.P."/>
        </authorList>
    </citation>
    <scope>PHOSPHORYLATION [LARGE SCALE ANALYSIS] AT SER-614</scope>
    <scope>IDENTIFICATION BY MASS SPECTROMETRY [LARGE SCALE ANALYSIS]</scope>
    <source>
        <tissue>Cervix carcinoma</tissue>
    </source>
</reference>
<reference key="17">
    <citation type="journal article" date="2009" name="Anal. Chem.">
        <title>Lys-N and trypsin cover complementary parts of the phosphoproteome in a refined SCX-based approach.</title>
        <authorList>
            <person name="Gauci S."/>
            <person name="Helbig A.O."/>
            <person name="Slijper M."/>
            <person name="Krijgsveld J."/>
            <person name="Heck A.J."/>
            <person name="Mohammed S."/>
        </authorList>
    </citation>
    <scope>IDENTIFICATION BY MASS SPECTROMETRY [LARGE SCALE ANALYSIS]</scope>
</reference>
<reference key="18">
    <citation type="journal article" date="2009" name="Mol. Cell. Proteomics">
        <title>Large-scale proteomics analysis of the human kinome.</title>
        <authorList>
            <person name="Oppermann F.S."/>
            <person name="Gnad F."/>
            <person name="Olsen J.V."/>
            <person name="Hornberger R."/>
            <person name="Greff Z."/>
            <person name="Keri G."/>
            <person name="Mann M."/>
            <person name="Daub H."/>
        </authorList>
    </citation>
    <scope>PHOSPHORYLATION [LARGE SCALE ANALYSIS] AT SER-1528</scope>
    <scope>IDENTIFICATION BY MASS SPECTROMETRY [LARGE SCALE ANALYSIS]</scope>
</reference>
<reference key="19">
    <citation type="journal article" date="2009" name="Proc. Natl. Acad. Sci. U.S.A.">
        <title>Interaction of phosphodiesterase 3A with brefeldin A-inhibited guanine nucleotide-exchange proteins BIG1 and BIG2 and effect on ARF1 activity.</title>
        <authorList>
            <person name="Puxeddu E."/>
            <person name="Uhart M."/>
            <person name="Li C.C."/>
            <person name="Ahmad F."/>
            <person name="Pacheco-Rodriguez G."/>
            <person name="Manganiello V.C."/>
            <person name="Moss J."/>
            <person name="Vaughan M."/>
        </authorList>
    </citation>
    <scope>INTERACTION WITH PDE3A</scope>
</reference>
<reference key="20">
    <citation type="journal article" date="2009" name="Sci. Signal.">
        <title>Quantitative phosphoproteomic analysis of T cell receptor signaling reveals system-wide modulation of protein-protein interactions.</title>
        <authorList>
            <person name="Mayya V."/>
            <person name="Lundgren D.H."/>
            <person name="Hwang S.-I."/>
            <person name="Rezaul K."/>
            <person name="Wu L."/>
            <person name="Eng J.K."/>
            <person name="Rodionov V."/>
            <person name="Han D.K."/>
        </authorList>
    </citation>
    <scope>PHOSPHORYLATION [LARGE SCALE ANALYSIS] AT SER-227; SER-277; SER-1525 AND SER-1528</scope>
    <scope>IDENTIFICATION BY MASS SPECTROMETRY [LARGE SCALE ANALYSIS]</scope>
    <source>
        <tissue>Leukemic T-cell</tissue>
    </source>
</reference>
<reference key="21">
    <citation type="journal article" date="2010" name="PLoS ONE">
        <title>Specific functions of BIG1 and BIG2 in endomembrane organization.</title>
        <authorList>
            <person name="Boal F."/>
            <person name="Stephens D.J."/>
        </authorList>
    </citation>
    <scope>FUNCTION</scope>
</reference>
<reference key="22">
    <citation type="journal article" date="2010" name="Sci. Signal.">
        <title>Quantitative phosphoproteomics reveals widespread full phosphorylation site occupancy during mitosis.</title>
        <authorList>
            <person name="Olsen J.V."/>
            <person name="Vermeulen M."/>
            <person name="Santamaria A."/>
            <person name="Kumar C."/>
            <person name="Miller M.L."/>
            <person name="Jensen L.J."/>
            <person name="Gnad F."/>
            <person name="Cox J."/>
            <person name="Jensen T.S."/>
            <person name="Nigg E.A."/>
            <person name="Brunak S."/>
            <person name="Mann M."/>
        </authorList>
    </citation>
    <scope>PHOSPHORYLATION [LARGE SCALE ANALYSIS] AT SER-218; SER-227 AND SER-1528</scope>
    <scope>IDENTIFICATION BY MASS SPECTROMETRY [LARGE SCALE ANALYSIS]</scope>
    <source>
        <tissue>Cervix carcinoma</tissue>
    </source>
</reference>
<reference key="23">
    <citation type="journal article" date="2011" name="BMC Syst. Biol.">
        <title>Initial characterization of the human central proteome.</title>
        <authorList>
            <person name="Burkard T.R."/>
            <person name="Planyavsky M."/>
            <person name="Kaupe I."/>
            <person name="Breitwieser F.P."/>
            <person name="Buerckstuemmer T."/>
            <person name="Bennett K.L."/>
            <person name="Superti-Furga G."/>
            <person name="Colinge J."/>
        </authorList>
    </citation>
    <scope>IDENTIFICATION BY MASS SPECTROMETRY [LARGE SCALE ANALYSIS]</scope>
</reference>
<reference key="24">
    <citation type="journal article" date="2011" name="Sci. Signal.">
        <title>System-wide temporal characterization of the proteome and phosphoproteome of human embryonic stem cell differentiation.</title>
        <authorList>
            <person name="Rigbolt K.T."/>
            <person name="Prokhorova T.A."/>
            <person name="Akimov V."/>
            <person name="Henningsen J."/>
            <person name="Johansen P.T."/>
            <person name="Kratchmarova I."/>
            <person name="Kassem M."/>
            <person name="Mann M."/>
            <person name="Olsen J.V."/>
            <person name="Blagoev B."/>
        </authorList>
    </citation>
    <scope>PHOSPHORYLATION [LARGE SCALE ANALYSIS] AT SER-218 AND SER-227</scope>
    <scope>IDENTIFICATION BY MASS SPECTROMETRY [LARGE SCALE ANALYSIS]</scope>
</reference>
<reference key="25">
    <citation type="journal article" date="2012" name="Proc. Natl. Acad. Sci. U.S.A.">
        <title>N-terminal acetylome analyses and functional insights of the N-terminal acetyltransferase NatB.</title>
        <authorList>
            <person name="Van Damme P."/>
            <person name="Lasa M."/>
            <person name="Polevoda B."/>
            <person name="Gazquez C."/>
            <person name="Elosegui-Artola A."/>
            <person name="Kim D.S."/>
            <person name="De Juan-Pardo E."/>
            <person name="Demeyer K."/>
            <person name="Hole K."/>
            <person name="Larrea E."/>
            <person name="Timmerman E."/>
            <person name="Prieto J."/>
            <person name="Arnesen T."/>
            <person name="Sherman F."/>
            <person name="Gevaert K."/>
            <person name="Aldabe R."/>
        </authorList>
    </citation>
    <scope>ACETYLATION [LARGE SCALE ANALYSIS] AT MET-1</scope>
    <scope>IDENTIFICATION BY MASS SPECTROMETRY [LARGE SCALE ANALYSIS]</scope>
</reference>
<reference key="26">
    <citation type="journal article" date="2013" name="J. Med. Genet.">
        <title>West syndrome, microcephaly, grey matter heterotopia and hypoplasia of corpus callosum due to a novel ARFGEF2 mutation.</title>
        <authorList>
            <person name="Banne E."/>
            <person name="Atawneh O."/>
            <person name="Henneke M."/>
            <person name="Brockmann K."/>
            <person name="Gaertner J."/>
            <person name="Elpeleg O."/>
            <person name="Edvardson S."/>
        </authorList>
    </citation>
    <scope>INVOLVEMENT IN PVNH2</scope>
</reference>
<reference key="27">
    <citation type="journal article" date="2004" name="Nat. Genet.">
        <title>Mutations in ARFGEF2 implicate vesicle trafficking in neural progenitor proliferation and migration in the human cerebral cortex.</title>
        <authorList>
            <person name="Sheen V.L."/>
            <person name="Ganesh V.S."/>
            <person name="Topcu M."/>
            <person name="Sebire G."/>
            <person name="Bodell A."/>
            <person name="Hill R.S."/>
            <person name="Grant P.E."/>
            <person name="Shugart Y.Y."/>
            <person name="Imitola J."/>
            <person name="Khoury S.J."/>
            <person name="Guerrini R."/>
            <person name="Walsh C.A."/>
        </authorList>
    </citation>
    <scope>INVOLVEMENT IN PVNH2</scope>
    <scope>VARIANT PVNH2 LYS-209</scope>
</reference>
<reference key="28">
    <citation type="journal article" date="2013" name="J. Proteome Res.">
        <title>Toward a comprehensive characterization of a human cancer cell phosphoproteome.</title>
        <authorList>
            <person name="Zhou H."/>
            <person name="Di Palma S."/>
            <person name="Preisinger C."/>
            <person name="Peng M."/>
            <person name="Polat A.N."/>
            <person name="Heck A.J."/>
            <person name="Mohammed S."/>
        </authorList>
    </citation>
    <scope>PHOSPHORYLATION [LARGE SCALE ANALYSIS] AT SER-227; THR-244; SER-277; SER-349; SER-1511; SER-1525 AND SER-1528</scope>
    <scope>IDENTIFICATION BY MASS SPECTROMETRY [LARGE SCALE ANALYSIS]</scope>
    <source>
        <tissue>Cervix carcinoma</tissue>
        <tissue>Erythroleukemia</tissue>
    </source>
</reference>
<reference key="29">
    <citation type="journal article" date="2014" name="J. Proteomics">
        <title>An enzyme assisted RP-RPLC approach for in-depth analysis of human liver phosphoproteome.</title>
        <authorList>
            <person name="Bian Y."/>
            <person name="Song C."/>
            <person name="Cheng K."/>
            <person name="Dong M."/>
            <person name="Wang F."/>
            <person name="Huang J."/>
            <person name="Sun D."/>
            <person name="Wang L."/>
            <person name="Ye M."/>
            <person name="Zou H."/>
        </authorList>
    </citation>
    <scope>PHOSPHORYLATION [LARGE SCALE ANALYSIS] AT SER-214; SER-218; SER-227 AND SER-700</scope>
    <scope>IDENTIFICATION BY MASS SPECTROMETRY [LARGE SCALE ANALYSIS]</scope>
    <source>
        <tissue>Liver</tissue>
    </source>
</reference>
<reference key="30">
    <citation type="journal article" date="2014" name="Pediatr. Neurol.">
        <title>Periventricular nodular heterotopia and dystonia due to an ARFGEF2 mutation.</title>
        <authorList>
            <person name="Bardon-Cancho E.J."/>
            <person name="Munoz-Jimenez L."/>
            <person name="Vazquez-Lopez M."/>
            <person name="Ruiz-Martin Y."/>
            <person name="Garcia-Morin M."/>
            <person name="Barredo-Valderrama E."/>
        </authorList>
    </citation>
    <scope>INVOLVEMENT IN PVNH2</scope>
</reference>
<reference key="31">
    <citation type="journal article" date="2006" name="Science">
        <title>The consensus coding sequences of human breast and colorectal cancers.</title>
        <authorList>
            <person name="Sjoeblom T."/>
            <person name="Jones S."/>
            <person name="Wood L.D."/>
            <person name="Parsons D.W."/>
            <person name="Lin J."/>
            <person name="Barber T.D."/>
            <person name="Mandelker D."/>
            <person name="Leary R.J."/>
            <person name="Ptak J."/>
            <person name="Silliman N."/>
            <person name="Szabo S."/>
            <person name="Buckhaults P."/>
            <person name="Farrell C."/>
            <person name="Meeh P."/>
            <person name="Markowitz S.D."/>
            <person name="Willis J."/>
            <person name="Dawson D."/>
            <person name="Willson J.K.V."/>
            <person name="Gazdar A.F."/>
            <person name="Hartigan J."/>
            <person name="Wu L."/>
            <person name="Liu C."/>
            <person name="Parmigiani G."/>
            <person name="Park B.H."/>
            <person name="Bachman K.E."/>
            <person name="Papadopoulos N."/>
            <person name="Vogelstein B."/>
            <person name="Kinzler K.W."/>
            <person name="Velculescu V.E."/>
        </authorList>
    </citation>
    <scope>VARIANT [LARGE SCALE ANALYSIS] GLU-794</scope>
</reference>
<reference key="32">
    <citation type="journal article" date="2012" name="N. Engl. J. Med.">
        <title>Diagnostic exome sequencing in persons with severe intellectual disability.</title>
        <authorList>
            <person name="de Ligt J."/>
            <person name="Willemsen M.H."/>
            <person name="van Bon B.W."/>
            <person name="Kleefstra T."/>
            <person name="Yntema H.G."/>
            <person name="Kroes T."/>
            <person name="Vulto-van Silfhout A.T."/>
            <person name="Koolen D.A."/>
            <person name="de Vries P."/>
            <person name="Gilissen C."/>
            <person name="del Rosario M."/>
            <person name="Hoischen A."/>
            <person name="Scheffer H."/>
            <person name="de Vries B.B."/>
            <person name="Brunner H.G."/>
            <person name="Veltman J.A."/>
            <person name="Vissers L.E."/>
        </authorList>
    </citation>
    <scope>VARIANT GLN-802</scope>
</reference>
<keyword id="KW-0002">3D-structure</keyword>
<keyword id="KW-0007">Acetylation</keyword>
<keyword id="KW-0966">Cell projection</keyword>
<keyword id="KW-0963">Cytoplasm</keyword>
<keyword id="KW-0968">Cytoplasmic vesicle</keyword>
<keyword id="KW-0206">Cytoskeleton</keyword>
<keyword id="KW-0225">Disease variant</keyword>
<keyword id="KW-0967">Endosome</keyword>
<keyword id="KW-0333">Golgi apparatus</keyword>
<keyword id="KW-0344">Guanine-nucleotide releasing factor</keyword>
<keyword id="KW-0472">Membrane</keyword>
<keyword id="KW-0597">Phosphoprotein</keyword>
<keyword id="KW-0653">Protein transport</keyword>
<keyword id="KW-1267">Proteomics identification</keyword>
<keyword id="KW-1185">Reference proteome</keyword>
<keyword id="KW-0770">Synapse</keyword>
<keyword id="KW-0813">Transport</keyword>
<protein>
    <recommendedName>
        <fullName>Brefeldin A-inhibited guanine nucleotide-exchange protein 2</fullName>
        <shortName>Brefeldin A-inhibited GEP 2</shortName>
    </recommendedName>
    <alternativeName>
        <fullName>ADP-ribosylation factor guanine nucleotide-exchange factor 2</fullName>
    </alternativeName>
</protein>
<comment type="function">
    <text evidence="6 7 9 10 12 14 15">Promotes guanine-nucleotide exchange on ARF1 and ARF3 and to a lower extent on ARF5 and ARF6. Promotes the activation of ARF1/ARF5/ARF6 through replacement of GDP with GTP. Involved in the regulation of Golgi vesicular transport. Required for the integrity of the endosomal compartment. Involved in trafficking from the trans-Golgi network (TGN) to endosomes and is required for membrane association of the AP-1 complex and GGA1. Seems to be involved in recycling of the transferrin receptor from recycling endosomes to the plasma membrane. Probably is involved in the exit of GABA(A) receptors from the endoplasmic reticulum. Involved in constitutive release of tumor necrosis factor receptor 1 via exosome-like vesicles; the function seems to involve PKA and specifically PRKAR2B. Proposed to act as A kinase-anchoring protein (AKAP) and may mediate crosstalk between Arf and PKA pathways.</text>
</comment>
<comment type="activity regulation">
    <text>Inhibited by brefeldin A.</text>
</comment>
<comment type="subunit">
    <text evidence="1 19">Homodimer (Probable). Interacts with ARFGEF1/BIG1; both proteins are probably part of the same or very similar macromolecular complexes. Interacts with PRKAR1A, PRKAR2A, PRKAR1B, PRKAR2B, PPP1CC, PDE3A, TNFRSF1A, MYCBP and EXOC7. Interacts with GABRB1, GABRB2 and GABRB3 (By similarity).</text>
</comment>
<comment type="interaction">
    <interactant intactId="EBI-2837511">
        <id>Q9Y6D5</id>
    </interactant>
    <interactant intactId="EBI-1044254">
        <id>Q9Y6D6</id>
        <label>ARFGEF1</label>
    </interactant>
    <organismsDiffer>false</organismsDiffer>
    <experiments>14</experiments>
</comment>
<comment type="interaction">
    <interactant intactId="EBI-2837511">
        <id>Q9Y6D5</id>
    </interactant>
    <interactant intactId="EBI-6251402">
        <id>Q9UPT5-1</id>
        <label>EXOC7</label>
    </interactant>
    <organismsDiffer>false</organismsDiffer>
    <experiments>4</experiments>
</comment>
<comment type="interaction">
    <interactant intactId="EBI-2837511">
        <id>Q9Y6D5</id>
    </interactant>
    <interactant intactId="EBI-716185">
        <id>Q99417</id>
        <label>MYCBP</label>
    </interactant>
    <organismsDiffer>false</organismsDiffer>
    <experiments>8</experiments>
</comment>
<comment type="interaction">
    <interactant intactId="EBI-2837511">
        <id>Q9Y6D5</id>
    </interactant>
    <interactant intactId="EBI-7192066">
        <id>Q14432</id>
        <label>PDE3A</label>
    </interactant>
    <organismsDiffer>false</organismsDiffer>
    <experiments>5</experiments>
</comment>
<comment type="subcellular location">
    <subcellularLocation>
        <location>Cytoplasm</location>
    </subcellularLocation>
    <subcellularLocation>
        <location>Membrane</location>
    </subcellularLocation>
    <subcellularLocation>
        <location>Golgi apparatus</location>
    </subcellularLocation>
    <subcellularLocation>
        <location>Cytoplasm</location>
        <location>Perinuclear region</location>
    </subcellularLocation>
    <subcellularLocation>
        <location evidence="1">Golgi apparatus</location>
        <location evidence="1">trans-Golgi network</location>
    </subcellularLocation>
    <subcellularLocation>
        <location evidence="1">Endosome</location>
    </subcellularLocation>
    <subcellularLocation>
        <location>Cytoplasm</location>
        <location>Cytoskeleton</location>
        <location>Microtubule organizing center</location>
        <location>Centrosome</location>
    </subcellularLocation>
    <subcellularLocation>
        <location evidence="1">Cell projection</location>
        <location evidence="1">Dendrite</location>
    </subcellularLocation>
    <subcellularLocation>
        <location evidence="1">Cytoplasmic vesicle</location>
    </subcellularLocation>
    <subcellularLocation>
        <location evidence="1">Synapse</location>
    </subcellularLocation>
    <subcellularLocation>
        <location evidence="1">Cytoplasm</location>
        <location evidence="1">Cytoskeleton</location>
    </subcellularLocation>
    <text>Translocates from cytoplasm to membranes upon cAMP treatment. Localized in recycling endosomes.</text>
</comment>
<comment type="tissue specificity">
    <text>Expressed in placenta, lung, heart, brain, kidney and pancreas.</text>
</comment>
<comment type="PTM">
    <text evidence="13">In vitro phosphorylated by PKA reducing its GEF activity and dephosphorylated by phosphatase PP1.</text>
</comment>
<comment type="disease" evidence="8 17 18">
    <disease id="DI-00911">
        <name>Periventricular nodular heterotopia 2</name>
        <acronym>PVNH2</acronym>
        <description>A developmental disorder characterized by the presence of periventricular nodules of cerebral gray matter, resulting from a failure of neurons to migrate normally from the lateral ventricular proliferative zone, where they are formed, to the cerebral cortex. PVNH2 is an autosomal recessive form characterized by microcephaly (small brain), severe developmental delay and recurrent infections. No anomalies extrinsic to the central nervous system, such as dysmorphic features or grossly abnormal endocrine or other conditions, are associated with PVNH2.</description>
        <dbReference type="MIM" id="608097"/>
    </disease>
    <text>The disease is caused by variants affecting the gene represented in this entry.</text>
</comment>
<evidence type="ECO:0000250" key="1"/>
<evidence type="ECO:0000250" key="2">
    <source>
        <dbReference type="UniProtKB" id="A2A5R2"/>
    </source>
</evidence>
<evidence type="ECO:0000250" key="3">
    <source>
        <dbReference type="UniProtKB" id="Q7TSU1"/>
    </source>
</evidence>
<evidence type="ECO:0000255" key="4">
    <source>
        <dbReference type="PROSITE-ProRule" id="PRU00189"/>
    </source>
</evidence>
<evidence type="ECO:0000256" key="5">
    <source>
        <dbReference type="SAM" id="MobiDB-lite"/>
    </source>
</evidence>
<evidence type="ECO:0000269" key="6">
    <source>
    </source>
</evidence>
<evidence type="ECO:0000269" key="7">
    <source>
    </source>
</evidence>
<evidence type="ECO:0000269" key="8">
    <source>
    </source>
</evidence>
<evidence type="ECO:0000269" key="9">
    <source>
    </source>
</evidence>
<evidence type="ECO:0000269" key="10">
    <source>
    </source>
</evidence>
<evidence type="ECO:0000269" key="11">
    <source>
    </source>
</evidence>
<evidence type="ECO:0000269" key="12">
    <source>
    </source>
</evidence>
<evidence type="ECO:0000269" key="13">
    <source>
    </source>
</evidence>
<evidence type="ECO:0000269" key="14">
    <source>
    </source>
</evidence>
<evidence type="ECO:0000269" key="15">
    <source>
    </source>
</evidence>
<evidence type="ECO:0000269" key="16">
    <source>
    </source>
</evidence>
<evidence type="ECO:0000269" key="17">
    <source>
    </source>
</evidence>
<evidence type="ECO:0000269" key="18">
    <source>
    </source>
</evidence>
<evidence type="ECO:0000305" key="19"/>
<evidence type="ECO:0007744" key="20">
    <source>
    </source>
</evidence>
<evidence type="ECO:0007744" key="21">
    <source>
    </source>
</evidence>
<evidence type="ECO:0007744" key="22">
    <source>
    </source>
</evidence>
<evidence type="ECO:0007744" key="23">
    <source>
    </source>
</evidence>
<evidence type="ECO:0007744" key="24">
    <source>
    </source>
</evidence>
<evidence type="ECO:0007744" key="25">
    <source>
    </source>
</evidence>
<evidence type="ECO:0007744" key="26">
    <source>
    </source>
</evidence>
<evidence type="ECO:0007744" key="27">
    <source>
    </source>
</evidence>
<evidence type="ECO:0007744" key="28">
    <source>
    </source>
</evidence>
<evidence type="ECO:0007744" key="29">
    <source>
    </source>
</evidence>
<evidence type="ECO:0007829" key="30">
    <source>
        <dbReference type="PDB" id="3L8N"/>
    </source>
</evidence>
<evidence type="ECO:0007829" key="31">
    <source>
        <dbReference type="PDB" id="3SWV"/>
    </source>
</evidence>
<sequence>MQESQTKSMFVSRALEKILADKEVKRPQHSQLRRACQVALDEIKAEIEKQRLGTAAPPKANFIEADKYFLPFELACQSKSPRVVSTSLDCLQKLIAYGHITGNAPDSGAPGKRLIDRIVETICSCFQGPQTDEGVQLQIIKALLTAVTSPHIEIHEGTILQTVRTCYNIYLASKNLINQTTAKATLTQMLNVIFTRMENQVLQEARELEKPIQSKPQSPVIQAAAVSPKFVRLKHSQAQSKPTTPEKTDLTNGEHARSDSGKVSTENGDAPRERGSSLSGTDDGAQEVVKDILEDVVTSAIKEAAEKHGLTEPERVLGELECQECAIPPGVDENSQTNGIADDRQSLSSADNLESDAQGHQVAARFSHVLQKDAFLVFRSLCKLSMKPLGEGPPDPKSHELRSKVVSLQLLLSVLQNAGPVFRTHEMFINAIKQYLCVALSKNGVSSVPDVFELSLAIFLTLLSNFKMHLKMQIEVFFKEIFLNILETSTSSFEHRWMVIQTLTRICADAQCVVDIYVNYDCDLNAANIFERLVNDLSKIAQGRSGHELGMTPLQELSLRKKGLECLVSILKCMVEWSKDLYVNPNHQTSLGQERLTDQEIGDGKGLDMARRCSVTSMESTVSSGTQTTVQDDPEQFEVIKQQKEIIEHGIELFNKKPKRGIQFLQEQGMLGTSVEDIAQFLHQEERLDSTQVGDFLGDSARFNKEVMYAYVDQLDFCEKEFVSALRTFLEGFRLPGEAQKIDRLMEKFAARYIECNQGQTLFASADTAYVLAYSIIMLTTDLHSPQVKNKMTKEQYIKMNRGINDSKDLPEEYLSSIYEEIEGKKIAMKETKELTIATKSTKQNVASEKQRRLLYNLEMEQMAKTAKALMEAVSHAKAPFTSATHLDHVRPMFKLVWTPLLAAYSIGLQNCDDTEVASLCLEGIRCAIRIACIFGMQLERDAYVQALARFSLLTASSSITEMKQKNIDTIKTLITVAHTDGNYLGNSWHEILKCISQLELAQLIGTGVKTRYLSGSGREREGSLKGHTLAGEEFMGLGLGNLVSGGVDKRQMASFQESVGETSSQSVVVAVDRIFTGSTRLDGNAIVDFVRWLCAVSMDELASPHHPRMFSLQKIVEISYYNMNRIRLQWSRIWHVIGDHFNKVGCNPNEDVAIFAVDSLRQLSMKFLEKGELANFRFQKDFLRPFEHIMKKNRSPTIRDMAIRCIAQMVNSQAANIRSGWKNIFAVFHQAASDHDGNIVELAFQTTCHIVTTIFQHHFPAAIDSFQDAVKCLSEFACNAAFPDTSMEAIRLIRFCGKYVSERPRVLQEYTSDDMNVAPGDRVWVRGWFPILFELSCIINRCKLDVRTRGLTVMFEIMKSYGHTFEKHWWQDLFRIVFRIFDNMKLPEQLSEKSEWMTTTCNHALYAICDVFTQFYEALNEVLLSDVFAQLQWCVKQDNEQLARSGTNCLENLVISNGEKFSPEVWDETCNCMLDIFKTTIPHVLLTWRPVGMEEDSSEKHLDVDLDRQSLSSIDKNPSERGQSQLSNPTDDSWKGRPYANQKLFASLLIKCVVQLELIQTIDNIVFYPATSKKEDAEHMVAAQQDTLDADIHIETEDQGMYKYMSSQHLFKLLDCLQESHSFSKAFNSNYEQRTVLWRAGFKGKSKPNLLKQETSSLACCLRILFRMYVDENRRDSWEEIQQRLLTVCSEALAYFITVNSESHREAWTSLLLLLLTKTLKINDEKFKAHASMYYPYLCEIMQFDLIPELRAVLRKFFLRIGVVYKIWIPEEPSQVPAALSPVW</sequence>
<feature type="chain" id="PRO_0000120208" description="Brefeldin A-inhibited guanine nucleotide-exchange protein 2">
    <location>
        <begin position="1"/>
        <end position="1785"/>
    </location>
</feature>
<feature type="domain" description="SEC7" evidence="4">
    <location>
        <begin position="654"/>
        <end position="785"/>
    </location>
</feature>
<feature type="region of interest" description="DCB; DCB:DCB domain and DCB:HUS domain interaction">
    <location>
        <begin position="2"/>
        <end position="224"/>
    </location>
</feature>
<feature type="region of interest" description="Disordered" evidence="5">
    <location>
        <begin position="232"/>
        <end position="285"/>
    </location>
</feature>
<feature type="region of interest" description="HUS; DCB:HUS domain interaction">
    <location>
        <begin position="508"/>
        <end position="528"/>
    </location>
</feature>
<feature type="region of interest" description="Disordered" evidence="5">
    <location>
        <begin position="1514"/>
        <end position="1535"/>
    </location>
</feature>
<feature type="compositionally biased region" description="Basic and acidic residues" evidence="5">
    <location>
        <begin position="244"/>
        <end position="260"/>
    </location>
</feature>
<feature type="compositionally biased region" description="Polar residues" evidence="5">
    <location>
        <begin position="1514"/>
        <end position="1532"/>
    </location>
</feature>
<feature type="modified residue" description="N-acetylmethionine" evidence="27">
    <location>
        <position position="1"/>
    </location>
</feature>
<feature type="modified residue" description="Phosphoserine" evidence="29">
    <location>
        <position position="214"/>
    </location>
</feature>
<feature type="modified residue" description="Phosphoserine" evidence="20 22 25 26 29">
    <location>
        <position position="218"/>
    </location>
</feature>
<feature type="modified residue" description="Phosphoserine" evidence="20 22 24 25 26 28 29">
    <location>
        <position position="227"/>
    </location>
</feature>
<feature type="modified residue" description="Phosphothreonine" evidence="28">
    <location>
        <position position="244"/>
    </location>
</feature>
<feature type="modified residue" description="Phosphoserine" evidence="24 28">
    <location>
        <position position="277"/>
    </location>
</feature>
<feature type="modified residue" description="Phosphoserine" evidence="3">
    <location>
        <position position="348"/>
    </location>
</feature>
<feature type="modified residue" description="Phosphoserine" evidence="28">
    <location>
        <position position="349"/>
    </location>
</feature>
<feature type="modified residue" description="Phosphoserine" evidence="21">
    <location>
        <position position="614"/>
    </location>
</feature>
<feature type="modified residue" description="Phosphothreonine" evidence="2">
    <location>
        <position position="616"/>
    </location>
</feature>
<feature type="modified residue" description="Phosphoserine" evidence="2">
    <location>
        <position position="617"/>
    </location>
</feature>
<feature type="modified residue" description="Phosphothreonine" evidence="2">
    <location>
        <position position="626"/>
    </location>
</feature>
<feature type="modified residue" description="Phosphoserine" evidence="29">
    <location>
        <position position="700"/>
    </location>
</feature>
<feature type="modified residue" description="Phosphoserine" evidence="28">
    <location>
        <position position="1511"/>
    </location>
</feature>
<feature type="modified residue" description="Phosphoserine" evidence="3">
    <location>
        <position position="1513"/>
    </location>
</feature>
<feature type="modified residue" description="Phosphoserine" evidence="3">
    <location>
        <position position="1514"/>
    </location>
</feature>
<feature type="modified residue" description="Phosphoserine" evidence="20 24 28">
    <location>
        <position position="1525"/>
    </location>
</feature>
<feature type="modified residue" description="Phosphoserine" evidence="20 22 23 24 25 28">
    <location>
        <position position="1528"/>
    </location>
</feature>
<feature type="modified residue" description="Phosphoserine" evidence="3">
    <location>
        <position position="1534"/>
    </location>
</feature>
<feature type="modified residue" description="Phosphoserine" evidence="22">
    <location>
        <position position="1782"/>
    </location>
</feature>
<feature type="sequence variant" id="VAR_037438" description="In PVNH2; uncertain significance; dbSNP:rs28937880." evidence="8">
    <original>E</original>
    <variation>K</variation>
    <location>
        <position position="209"/>
    </location>
</feature>
<feature type="sequence variant" id="VAR_028750" description="In dbSNP:rs6063343.">
    <original>A</original>
    <variation>V</variation>
    <location>
        <position position="527"/>
    </location>
</feature>
<feature type="sequence variant" id="VAR_036156" description="In a breast cancer sample; somatic mutation." evidence="11">
    <original>K</original>
    <variation>E</variation>
    <location>
        <position position="794"/>
    </location>
</feature>
<feature type="sequence variant" id="VAR_069404" description="In dbSNP:rs748482139." evidence="16">
    <original>R</original>
    <variation>Q</variation>
    <location>
        <position position="802"/>
    </location>
</feature>
<feature type="mutagenesis site" description="Abolishes interaction with PRKAR2B and impairs TNFRSF1A release." evidence="14">
    <original>V</original>
    <variation>W</variation>
    <location>
        <position position="289"/>
    </location>
</feature>
<feature type="mutagenesis site" description="Abolishes interaction with PRKAR2B and impairs TNFRSF1A release." evidence="14">
    <original>V</original>
    <variation>W</variation>
    <location>
        <position position="534"/>
    </location>
</feature>
<feature type="mutagenesis site" description="Disturbs membrane organization at the TGN, impairs association of the AP-1 complex and GGA1 with the TGN membranes." evidence="6 9">
    <original>E</original>
    <variation>K</variation>
    <location>
        <position position="738"/>
    </location>
</feature>
<feature type="sequence conflict" description="In Ref. 1; AAD38428." evidence="19" ref="1">
    <original>E</original>
    <variation>R</variation>
    <location>
        <position position="207"/>
    </location>
</feature>
<feature type="sequence conflict" description="In Ref. 1; AAD38428." evidence="19" ref="1">
    <original>E</original>
    <variation>K</variation>
    <location>
        <position position="962"/>
    </location>
</feature>
<feature type="sequence conflict" description="In Ref. 1; AAD38428." evidence="19" ref="1">
    <original>D</original>
    <variation>N</variation>
    <location>
        <position position="1049"/>
    </location>
</feature>
<feature type="sequence conflict" description="In Ref. 1; AAD38428." evidence="19" ref="1">
    <original>G</original>
    <variation>S</variation>
    <location>
        <position position="1763"/>
    </location>
</feature>
<feature type="helix" evidence="31">
    <location>
        <begin position="641"/>
        <end position="643"/>
    </location>
</feature>
<feature type="turn" evidence="31">
    <location>
        <begin position="644"/>
        <end position="648"/>
    </location>
</feature>
<feature type="helix" evidence="30">
    <location>
        <begin position="649"/>
        <end position="654"/>
    </location>
</feature>
<feature type="helix" evidence="30">
    <location>
        <begin position="658"/>
        <end position="667"/>
    </location>
</feature>
<feature type="turn" evidence="30">
    <location>
        <begin position="674"/>
        <end position="678"/>
    </location>
</feature>
<feature type="helix" evidence="30">
    <location>
        <begin position="679"/>
        <end position="682"/>
    </location>
</feature>
<feature type="helix" evidence="30">
    <location>
        <begin position="690"/>
        <end position="694"/>
    </location>
</feature>
<feature type="turn" evidence="30">
    <location>
        <begin position="695"/>
        <end position="698"/>
    </location>
</feature>
<feature type="turn" evidence="30">
    <location>
        <begin position="702"/>
        <end position="705"/>
    </location>
</feature>
<feature type="helix" evidence="30">
    <location>
        <begin position="706"/>
        <end position="712"/>
    </location>
</feature>
<feature type="helix" evidence="30">
    <location>
        <begin position="723"/>
        <end position="729"/>
    </location>
</feature>
<feature type="helix" evidence="30">
    <location>
        <begin position="739"/>
        <end position="753"/>
    </location>
</feature>
<feature type="helix" evidence="30">
    <location>
        <begin position="766"/>
        <end position="777"/>
    </location>
</feature>
<feature type="turn" evidence="30">
    <location>
        <begin position="778"/>
        <end position="782"/>
    </location>
</feature>
<feature type="turn" evidence="30">
    <location>
        <begin position="796"/>
        <end position="798"/>
    </location>
</feature>
<feature type="strand" evidence="30">
    <location>
        <begin position="799"/>
        <end position="801"/>
    </location>
</feature>
<feature type="strand" evidence="31">
    <location>
        <begin position="804"/>
        <end position="808"/>
    </location>
</feature>
<feature type="helix" evidence="30">
    <location>
        <begin position="812"/>
        <end position="822"/>
    </location>
</feature>
<organism>
    <name type="scientific">Homo sapiens</name>
    <name type="common">Human</name>
    <dbReference type="NCBI Taxonomy" id="9606"/>
    <lineage>
        <taxon>Eukaryota</taxon>
        <taxon>Metazoa</taxon>
        <taxon>Chordata</taxon>
        <taxon>Craniata</taxon>
        <taxon>Vertebrata</taxon>
        <taxon>Euteleostomi</taxon>
        <taxon>Mammalia</taxon>
        <taxon>Eutheria</taxon>
        <taxon>Euarchontoglires</taxon>
        <taxon>Primates</taxon>
        <taxon>Haplorrhini</taxon>
        <taxon>Catarrhini</taxon>
        <taxon>Hominidae</taxon>
        <taxon>Homo</taxon>
    </lineage>
</organism>
<proteinExistence type="evidence at protein level"/>
<gene>
    <name type="primary">ARFGEF2</name>
    <name type="synonym">ARFGEP2</name>
    <name type="synonym">BIG2</name>
</gene>
<dbReference type="EMBL" id="AF084521">
    <property type="protein sequence ID" value="AAD38428.1"/>
    <property type="molecule type" value="mRNA"/>
</dbReference>
<dbReference type="EMBL" id="AL049537">
    <property type="status" value="NOT_ANNOTATED_CDS"/>
    <property type="molecule type" value="Genomic_DNA"/>
</dbReference>
<dbReference type="EMBL" id="AL121903">
    <property type="status" value="NOT_ANNOTATED_CDS"/>
    <property type="molecule type" value="Genomic_DNA"/>
</dbReference>
<dbReference type="CCDS" id="CCDS13411.1"/>
<dbReference type="RefSeq" id="NP_006411.2">
    <property type="nucleotide sequence ID" value="NM_006420.3"/>
</dbReference>
<dbReference type="PDB" id="3L8N">
    <property type="method" value="X-ray"/>
    <property type="resolution" value="2.86 A"/>
    <property type="chains" value="A=635-836"/>
</dbReference>
<dbReference type="PDB" id="3SWV">
    <property type="method" value="X-ray"/>
    <property type="resolution" value="3.00 A"/>
    <property type="chains" value="A=635-836"/>
</dbReference>
<dbReference type="PDBsum" id="3L8N"/>
<dbReference type="PDBsum" id="3SWV"/>
<dbReference type="SMR" id="Q9Y6D5"/>
<dbReference type="BioGRID" id="115815">
    <property type="interactions" value="153"/>
</dbReference>
<dbReference type="DIP" id="DIP-48794N"/>
<dbReference type="FunCoup" id="Q9Y6D5">
    <property type="interactions" value="4058"/>
</dbReference>
<dbReference type="IntAct" id="Q9Y6D5">
    <property type="interactions" value="83"/>
</dbReference>
<dbReference type="MINT" id="Q9Y6D5"/>
<dbReference type="STRING" id="9606.ENSP00000360985"/>
<dbReference type="ChEMBL" id="CHEMBL4105732"/>
<dbReference type="GlyGen" id="Q9Y6D5">
    <property type="glycosylation" value="2 sites, 1 N-linked glycan (1 site), 1 O-linked glycan (1 site)"/>
</dbReference>
<dbReference type="iPTMnet" id="Q9Y6D5"/>
<dbReference type="PhosphoSitePlus" id="Q9Y6D5"/>
<dbReference type="BioMuta" id="ARFGEF2"/>
<dbReference type="DMDM" id="146329988"/>
<dbReference type="jPOST" id="Q9Y6D5"/>
<dbReference type="MassIVE" id="Q9Y6D5"/>
<dbReference type="PaxDb" id="9606-ENSP00000360985"/>
<dbReference type="PeptideAtlas" id="Q9Y6D5"/>
<dbReference type="ProteomicsDB" id="86654"/>
<dbReference type="Pumba" id="Q9Y6D5"/>
<dbReference type="Antibodypedia" id="13512">
    <property type="antibodies" value="147 antibodies from 24 providers"/>
</dbReference>
<dbReference type="DNASU" id="10564"/>
<dbReference type="Ensembl" id="ENST00000371917.5">
    <property type="protein sequence ID" value="ENSP00000360985.4"/>
    <property type="gene ID" value="ENSG00000124198.10"/>
</dbReference>
<dbReference type="GeneID" id="10564"/>
<dbReference type="KEGG" id="hsa:10564"/>
<dbReference type="MANE-Select" id="ENST00000371917.5">
    <property type="protein sequence ID" value="ENSP00000360985.4"/>
    <property type="RefSeq nucleotide sequence ID" value="NM_006420.3"/>
    <property type="RefSeq protein sequence ID" value="NP_006411.2"/>
</dbReference>
<dbReference type="UCSC" id="uc002xtx.5">
    <property type="organism name" value="human"/>
</dbReference>
<dbReference type="AGR" id="HGNC:15853"/>
<dbReference type="CTD" id="10564"/>
<dbReference type="DisGeNET" id="10564"/>
<dbReference type="GeneCards" id="ARFGEF2"/>
<dbReference type="HGNC" id="HGNC:15853">
    <property type="gene designation" value="ARFGEF2"/>
</dbReference>
<dbReference type="HPA" id="ENSG00000124198">
    <property type="expression patterns" value="Tissue enhanced (parathyroid)"/>
</dbReference>
<dbReference type="MalaCards" id="ARFGEF2"/>
<dbReference type="MIM" id="605371">
    <property type="type" value="gene"/>
</dbReference>
<dbReference type="MIM" id="608097">
    <property type="type" value="phenotype"/>
</dbReference>
<dbReference type="neXtProt" id="NX_Q9Y6D5"/>
<dbReference type="OpenTargets" id="ENSG00000124198"/>
<dbReference type="Orphanet" id="98892">
    <property type="disease" value="Periventricular nodular heterotopia"/>
</dbReference>
<dbReference type="PharmGKB" id="PA24945"/>
<dbReference type="VEuPathDB" id="HostDB:ENSG00000124198"/>
<dbReference type="eggNOG" id="KOG0929">
    <property type="taxonomic scope" value="Eukaryota"/>
</dbReference>
<dbReference type="GeneTree" id="ENSGT00940000158950"/>
<dbReference type="HOGENOM" id="CLU_000691_1_2_1"/>
<dbReference type="InParanoid" id="Q9Y6D5"/>
<dbReference type="OMA" id="FWKSNEM"/>
<dbReference type="OrthoDB" id="18431at2759"/>
<dbReference type="PAN-GO" id="Q9Y6D5">
    <property type="GO annotations" value="0 GO annotations based on evolutionary models"/>
</dbReference>
<dbReference type="PhylomeDB" id="Q9Y6D5"/>
<dbReference type="TreeFam" id="TF300714"/>
<dbReference type="PathwayCommons" id="Q9Y6D5"/>
<dbReference type="Reactome" id="R-HSA-390471">
    <property type="pathway name" value="Association of TriC/CCT with target proteins during biosynthesis"/>
</dbReference>
<dbReference type="SignaLink" id="Q9Y6D5"/>
<dbReference type="BioGRID-ORCS" id="10564">
    <property type="hits" value="10 hits in 1157 CRISPR screens"/>
</dbReference>
<dbReference type="CD-CODE" id="FB4E32DD">
    <property type="entry name" value="Presynaptic clusters and postsynaptic densities"/>
</dbReference>
<dbReference type="ChiTaRS" id="ARFGEF2">
    <property type="organism name" value="human"/>
</dbReference>
<dbReference type="EvolutionaryTrace" id="Q9Y6D5"/>
<dbReference type="GeneWiki" id="ARFGEF2"/>
<dbReference type="GenomeRNAi" id="10564"/>
<dbReference type="Pharos" id="Q9Y6D5">
    <property type="development level" value="Tbio"/>
</dbReference>
<dbReference type="PRO" id="PR:Q9Y6D5"/>
<dbReference type="Proteomes" id="UP000005640">
    <property type="component" value="Chromosome 20"/>
</dbReference>
<dbReference type="RNAct" id="Q9Y6D5">
    <property type="molecule type" value="protein"/>
</dbReference>
<dbReference type="Bgee" id="ENSG00000124198">
    <property type="expression patterns" value="Expressed in cartilage tissue and 210 other cell types or tissues"/>
</dbReference>
<dbReference type="GO" id="GO:0032279">
    <property type="term" value="C:asymmetric synapse"/>
    <property type="evidence" value="ECO:0000250"/>
    <property type="project" value="UniProtKB"/>
</dbReference>
<dbReference type="GO" id="GO:0005879">
    <property type="term" value="C:axonemal microtubule"/>
    <property type="evidence" value="ECO:0000250"/>
    <property type="project" value="UniProtKB"/>
</dbReference>
<dbReference type="GO" id="GO:0005813">
    <property type="term" value="C:centrosome"/>
    <property type="evidence" value="ECO:0007669"/>
    <property type="project" value="UniProtKB-SubCell"/>
</dbReference>
<dbReference type="GO" id="GO:0031410">
    <property type="term" value="C:cytoplasmic vesicle"/>
    <property type="evidence" value="ECO:0000250"/>
    <property type="project" value="UniProtKB"/>
</dbReference>
<dbReference type="GO" id="GO:0005829">
    <property type="term" value="C:cytosol"/>
    <property type="evidence" value="ECO:0000314"/>
    <property type="project" value="MGI"/>
</dbReference>
<dbReference type="GO" id="GO:0043197">
    <property type="term" value="C:dendritic spine"/>
    <property type="evidence" value="ECO:0000250"/>
    <property type="project" value="UniProtKB"/>
</dbReference>
<dbReference type="GO" id="GO:0098982">
    <property type="term" value="C:GABA-ergic synapse"/>
    <property type="evidence" value="ECO:0007669"/>
    <property type="project" value="Ensembl"/>
</dbReference>
<dbReference type="GO" id="GO:0098978">
    <property type="term" value="C:glutamatergic synapse"/>
    <property type="evidence" value="ECO:0007669"/>
    <property type="project" value="Ensembl"/>
</dbReference>
<dbReference type="GO" id="GO:0000139">
    <property type="term" value="C:Golgi membrane"/>
    <property type="evidence" value="ECO:0000314"/>
    <property type="project" value="UniProtKB"/>
</dbReference>
<dbReference type="GO" id="GO:0016020">
    <property type="term" value="C:membrane"/>
    <property type="evidence" value="ECO:0000314"/>
    <property type="project" value="MGI"/>
</dbReference>
<dbReference type="GO" id="GO:0005815">
    <property type="term" value="C:microtubule organizing center"/>
    <property type="evidence" value="ECO:0000314"/>
    <property type="project" value="UniProtKB"/>
</dbReference>
<dbReference type="GO" id="GO:0048471">
    <property type="term" value="C:perinuclear region of cytoplasm"/>
    <property type="evidence" value="ECO:0007669"/>
    <property type="project" value="UniProtKB-SubCell"/>
</dbReference>
<dbReference type="GO" id="GO:0098793">
    <property type="term" value="C:presynapse"/>
    <property type="evidence" value="ECO:0007669"/>
    <property type="project" value="Ensembl"/>
</dbReference>
<dbReference type="GO" id="GO:0055037">
    <property type="term" value="C:recycling endosome"/>
    <property type="evidence" value="ECO:0000314"/>
    <property type="project" value="UniProtKB"/>
</dbReference>
<dbReference type="GO" id="GO:0032280">
    <property type="term" value="C:symmetric synapse"/>
    <property type="evidence" value="ECO:0000250"/>
    <property type="project" value="UniProtKB"/>
</dbReference>
<dbReference type="GO" id="GO:0005802">
    <property type="term" value="C:trans-Golgi network"/>
    <property type="evidence" value="ECO:0000250"/>
    <property type="project" value="UniProtKB"/>
</dbReference>
<dbReference type="GO" id="GO:0050811">
    <property type="term" value="F:GABA receptor binding"/>
    <property type="evidence" value="ECO:0000250"/>
    <property type="project" value="UniProtKB"/>
</dbReference>
<dbReference type="GO" id="GO:0005085">
    <property type="term" value="F:guanyl-nucleotide exchange factor activity"/>
    <property type="evidence" value="ECO:0000314"/>
    <property type="project" value="UniProtKB"/>
</dbReference>
<dbReference type="GO" id="GO:0017022">
    <property type="term" value="F:myosin binding"/>
    <property type="evidence" value="ECO:0007669"/>
    <property type="project" value="Ensembl"/>
</dbReference>
<dbReference type="GO" id="GO:0034237">
    <property type="term" value="F:protein kinase A regulatory subunit binding"/>
    <property type="evidence" value="ECO:0000314"/>
    <property type="project" value="UniProtKB"/>
</dbReference>
<dbReference type="GO" id="GO:0010256">
    <property type="term" value="P:endomembrane system organization"/>
    <property type="evidence" value="ECO:0000315"/>
    <property type="project" value="UniProtKB"/>
</dbReference>
<dbReference type="GO" id="GO:0007032">
    <property type="term" value="P:endosome organization"/>
    <property type="evidence" value="ECO:0000315"/>
    <property type="project" value="UniProtKB"/>
</dbReference>
<dbReference type="GO" id="GO:0006887">
    <property type="term" value="P:exocytosis"/>
    <property type="evidence" value="ECO:0000304"/>
    <property type="project" value="ProtInc"/>
</dbReference>
<dbReference type="GO" id="GO:0006893">
    <property type="term" value="P:Golgi to plasma membrane transport"/>
    <property type="evidence" value="ECO:0000315"/>
    <property type="project" value="UniProtKB"/>
</dbReference>
<dbReference type="GO" id="GO:0035556">
    <property type="term" value="P:intracellular signal transduction"/>
    <property type="evidence" value="ECO:0000314"/>
    <property type="project" value="MGI"/>
</dbReference>
<dbReference type="GO" id="GO:0032760">
    <property type="term" value="P:positive regulation of tumor necrosis factor production"/>
    <property type="evidence" value="ECO:0000315"/>
    <property type="project" value="UniProtKB"/>
</dbReference>
<dbReference type="GO" id="GO:0015031">
    <property type="term" value="P:protein transport"/>
    <property type="evidence" value="ECO:0007669"/>
    <property type="project" value="UniProtKB-KW"/>
</dbReference>
<dbReference type="GO" id="GO:0001881">
    <property type="term" value="P:receptor recycling"/>
    <property type="evidence" value="ECO:0000314"/>
    <property type="project" value="UniProtKB"/>
</dbReference>
<dbReference type="GO" id="GO:0032012">
    <property type="term" value="P:regulation of ARF protein signal transduction"/>
    <property type="evidence" value="ECO:0007669"/>
    <property type="project" value="InterPro"/>
</dbReference>
<dbReference type="CDD" id="cd00171">
    <property type="entry name" value="Sec7"/>
    <property type="match status" value="1"/>
</dbReference>
<dbReference type="FunFam" id="1.25.10.10:FF:000143">
    <property type="entry name" value="ADP-ribosylation factor guanine nucleotide-exchange factor 2 (brefeldin A-inhibited)"/>
    <property type="match status" value="1"/>
</dbReference>
<dbReference type="FunFam" id="1.10.1000.11:FF:000003">
    <property type="entry name" value="Brefeldin A-inhibited guanine nucleotide-exchange protein 1"/>
    <property type="match status" value="1"/>
</dbReference>
<dbReference type="FunFam" id="1.10.220.20:FF:000002">
    <property type="entry name" value="Brefeldin A-inhibited guanine nucleotide-exchange protein 1"/>
    <property type="match status" value="1"/>
</dbReference>
<dbReference type="Gene3D" id="1.10.220.20">
    <property type="match status" value="1"/>
</dbReference>
<dbReference type="Gene3D" id="1.10.1000.11">
    <property type="entry name" value="Arf Nucleotide-binding Site Opener,domain 2"/>
    <property type="match status" value="1"/>
</dbReference>
<dbReference type="Gene3D" id="1.25.10.10">
    <property type="entry name" value="Leucine-rich Repeat Variant"/>
    <property type="match status" value="1"/>
</dbReference>
<dbReference type="InterPro" id="IPR011989">
    <property type="entry name" value="ARM-like"/>
</dbReference>
<dbReference type="InterPro" id="IPR016024">
    <property type="entry name" value="ARM-type_fold"/>
</dbReference>
<dbReference type="InterPro" id="IPR032629">
    <property type="entry name" value="DCB_dom"/>
</dbReference>
<dbReference type="InterPro" id="IPR015403">
    <property type="entry name" value="Mon2/Sec7/BIG1-like_HDS"/>
</dbReference>
<dbReference type="InterPro" id="IPR032691">
    <property type="entry name" value="Mon2/Sec7/BIG1-like_HUS"/>
</dbReference>
<dbReference type="InterPro" id="IPR046455">
    <property type="entry name" value="Sec7/BIG1-like_C"/>
</dbReference>
<dbReference type="InterPro" id="IPR023394">
    <property type="entry name" value="Sec7_C_sf"/>
</dbReference>
<dbReference type="InterPro" id="IPR000904">
    <property type="entry name" value="Sec7_dom"/>
</dbReference>
<dbReference type="InterPro" id="IPR035999">
    <property type="entry name" value="Sec7_dom_sf"/>
</dbReference>
<dbReference type="PANTHER" id="PTHR10663:SF124">
    <property type="entry name" value="BREFELDIN A-INHIBITED GUANINE NUCLEOTIDE-EXCHANGE PROTEIN 2"/>
    <property type="match status" value="1"/>
</dbReference>
<dbReference type="PANTHER" id="PTHR10663">
    <property type="entry name" value="GUANYL-NUCLEOTIDE EXCHANGE FACTOR"/>
    <property type="match status" value="1"/>
</dbReference>
<dbReference type="Pfam" id="PF20252">
    <property type="entry name" value="BIG2_C"/>
    <property type="match status" value="1"/>
</dbReference>
<dbReference type="Pfam" id="PF16213">
    <property type="entry name" value="DCB"/>
    <property type="match status" value="1"/>
</dbReference>
<dbReference type="Pfam" id="PF01369">
    <property type="entry name" value="Sec7"/>
    <property type="match status" value="1"/>
</dbReference>
<dbReference type="Pfam" id="PF09324">
    <property type="entry name" value="Sec7-like_HDS"/>
    <property type="match status" value="1"/>
</dbReference>
<dbReference type="Pfam" id="PF12783">
    <property type="entry name" value="Sec7-like_HUS"/>
    <property type="match status" value="1"/>
</dbReference>
<dbReference type="SMART" id="SM00222">
    <property type="entry name" value="Sec7"/>
    <property type="match status" value="1"/>
</dbReference>
<dbReference type="SUPFAM" id="SSF48371">
    <property type="entry name" value="ARM repeat"/>
    <property type="match status" value="1"/>
</dbReference>
<dbReference type="SUPFAM" id="SSF48425">
    <property type="entry name" value="Sec7 domain"/>
    <property type="match status" value="1"/>
</dbReference>
<dbReference type="PROSITE" id="PS50190">
    <property type="entry name" value="SEC7"/>
    <property type="match status" value="1"/>
</dbReference>
<accession>Q9Y6D5</accession>
<accession>Q5TFT9</accession>
<accession>Q9NTS1</accession>